<accession>Q8YE20</accession>
<dbReference type="EC" id="1.1.1.25" evidence="1"/>
<dbReference type="EMBL" id="AE008917">
    <property type="protein sequence ID" value="AAL53239.1"/>
    <property type="molecule type" value="Genomic_DNA"/>
</dbReference>
<dbReference type="PIR" id="AD3509">
    <property type="entry name" value="AD3509"/>
</dbReference>
<dbReference type="RefSeq" id="WP_002965133.1">
    <property type="nucleotide sequence ID" value="NZ_GG703778.1"/>
</dbReference>
<dbReference type="SMR" id="Q8YE20"/>
<dbReference type="KEGG" id="bme:BMEI2058"/>
<dbReference type="eggNOG" id="COG0169">
    <property type="taxonomic scope" value="Bacteria"/>
</dbReference>
<dbReference type="PhylomeDB" id="Q8YE20"/>
<dbReference type="UniPathway" id="UPA00053">
    <property type="reaction ID" value="UER00087"/>
</dbReference>
<dbReference type="Proteomes" id="UP000000419">
    <property type="component" value="Chromosome I"/>
</dbReference>
<dbReference type="GO" id="GO:0005829">
    <property type="term" value="C:cytosol"/>
    <property type="evidence" value="ECO:0007669"/>
    <property type="project" value="TreeGrafter"/>
</dbReference>
<dbReference type="GO" id="GO:0050661">
    <property type="term" value="F:NADP binding"/>
    <property type="evidence" value="ECO:0007669"/>
    <property type="project" value="InterPro"/>
</dbReference>
<dbReference type="GO" id="GO:0004764">
    <property type="term" value="F:shikimate 3-dehydrogenase (NADP+) activity"/>
    <property type="evidence" value="ECO:0007669"/>
    <property type="project" value="UniProtKB-UniRule"/>
</dbReference>
<dbReference type="GO" id="GO:0008652">
    <property type="term" value="P:amino acid biosynthetic process"/>
    <property type="evidence" value="ECO:0007669"/>
    <property type="project" value="UniProtKB-KW"/>
</dbReference>
<dbReference type="GO" id="GO:0009073">
    <property type="term" value="P:aromatic amino acid family biosynthetic process"/>
    <property type="evidence" value="ECO:0007669"/>
    <property type="project" value="UniProtKB-KW"/>
</dbReference>
<dbReference type="GO" id="GO:0009423">
    <property type="term" value="P:chorismate biosynthetic process"/>
    <property type="evidence" value="ECO:0007669"/>
    <property type="project" value="UniProtKB-UniRule"/>
</dbReference>
<dbReference type="GO" id="GO:0019632">
    <property type="term" value="P:shikimate metabolic process"/>
    <property type="evidence" value="ECO:0007669"/>
    <property type="project" value="InterPro"/>
</dbReference>
<dbReference type="CDD" id="cd01065">
    <property type="entry name" value="NAD_bind_Shikimate_DH"/>
    <property type="match status" value="1"/>
</dbReference>
<dbReference type="Gene3D" id="3.40.50.10860">
    <property type="entry name" value="Leucine Dehydrogenase, chain A, domain 1"/>
    <property type="match status" value="1"/>
</dbReference>
<dbReference type="Gene3D" id="3.40.50.720">
    <property type="entry name" value="NAD(P)-binding Rossmann-like Domain"/>
    <property type="match status" value="1"/>
</dbReference>
<dbReference type="HAMAP" id="MF_00222">
    <property type="entry name" value="Shikimate_DH_AroE"/>
    <property type="match status" value="1"/>
</dbReference>
<dbReference type="InterPro" id="IPR046346">
    <property type="entry name" value="Aminoacid_DH-like_N_sf"/>
</dbReference>
<dbReference type="InterPro" id="IPR036291">
    <property type="entry name" value="NAD(P)-bd_dom_sf"/>
</dbReference>
<dbReference type="InterPro" id="IPR041121">
    <property type="entry name" value="SDH_C"/>
</dbReference>
<dbReference type="InterPro" id="IPR011342">
    <property type="entry name" value="Shikimate_DH"/>
</dbReference>
<dbReference type="InterPro" id="IPR013708">
    <property type="entry name" value="Shikimate_DH-bd_N"/>
</dbReference>
<dbReference type="InterPro" id="IPR022893">
    <property type="entry name" value="Shikimate_DH_fam"/>
</dbReference>
<dbReference type="InterPro" id="IPR006151">
    <property type="entry name" value="Shikm_DH/Glu-tRNA_Rdtase"/>
</dbReference>
<dbReference type="NCBIfam" id="TIGR00507">
    <property type="entry name" value="aroE"/>
    <property type="match status" value="1"/>
</dbReference>
<dbReference type="NCBIfam" id="NF001312">
    <property type="entry name" value="PRK00258.1-4"/>
    <property type="match status" value="1"/>
</dbReference>
<dbReference type="PANTHER" id="PTHR21089:SF1">
    <property type="entry name" value="BIFUNCTIONAL 3-DEHYDROQUINATE DEHYDRATASE_SHIKIMATE DEHYDROGENASE, CHLOROPLASTIC"/>
    <property type="match status" value="1"/>
</dbReference>
<dbReference type="PANTHER" id="PTHR21089">
    <property type="entry name" value="SHIKIMATE DEHYDROGENASE"/>
    <property type="match status" value="1"/>
</dbReference>
<dbReference type="Pfam" id="PF18317">
    <property type="entry name" value="SDH_C"/>
    <property type="match status" value="1"/>
</dbReference>
<dbReference type="Pfam" id="PF01488">
    <property type="entry name" value="Shikimate_DH"/>
    <property type="match status" value="1"/>
</dbReference>
<dbReference type="Pfam" id="PF08501">
    <property type="entry name" value="Shikimate_dh_N"/>
    <property type="match status" value="1"/>
</dbReference>
<dbReference type="SUPFAM" id="SSF53223">
    <property type="entry name" value="Aminoacid dehydrogenase-like, N-terminal domain"/>
    <property type="match status" value="1"/>
</dbReference>
<dbReference type="SUPFAM" id="SSF51735">
    <property type="entry name" value="NAD(P)-binding Rossmann-fold domains"/>
    <property type="match status" value="1"/>
</dbReference>
<feature type="chain" id="PRO_0000135993" description="Shikimate dehydrogenase (NADP(+))">
    <location>
        <begin position="1"/>
        <end position="289"/>
    </location>
</feature>
<feature type="active site" description="Proton acceptor" evidence="1">
    <location>
        <position position="73"/>
    </location>
</feature>
<feature type="binding site" evidence="1">
    <location>
        <begin position="22"/>
        <end position="24"/>
    </location>
    <ligand>
        <name>shikimate</name>
        <dbReference type="ChEBI" id="CHEBI:36208"/>
    </ligand>
</feature>
<feature type="binding site" evidence="1">
    <location>
        <position position="69"/>
    </location>
    <ligand>
        <name>shikimate</name>
        <dbReference type="ChEBI" id="CHEBI:36208"/>
    </ligand>
</feature>
<feature type="binding site" evidence="1">
    <location>
        <position position="85"/>
    </location>
    <ligand>
        <name>NADP(+)</name>
        <dbReference type="ChEBI" id="CHEBI:58349"/>
    </ligand>
</feature>
<feature type="binding site" evidence="1">
    <location>
        <position position="94"/>
    </location>
    <ligand>
        <name>shikimate</name>
        <dbReference type="ChEBI" id="CHEBI:36208"/>
    </ligand>
</feature>
<feature type="binding site" evidence="1">
    <location>
        <position position="109"/>
    </location>
    <ligand>
        <name>shikimate</name>
        <dbReference type="ChEBI" id="CHEBI:36208"/>
    </ligand>
</feature>
<feature type="binding site" evidence="1">
    <location>
        <begin position="134"/>
        <end position="138"/>
    </location>
    <ligand>
        <name>NADP(+)</name>
        <dbReference type="ChEBI" id="CHEBI:58349"/>
    </ligand>
</feature>
<feature type="binding site" evidence="1">
    <location>
        <begin position="158"/>
        <end position="163"/>
    </location>
    <ligand>
        <name>NADP(+)</name>
        <dbReference type="ChEBI" id="CHEBI:58349"/>
    </ligand>
</feature>
<feature type="binding site" evidence="1">
    <location>
        <position position="226"/>
    </location>
    <ligand>
        <name>NADP(+)</name>
        <dbReference type="ChEBI" id="CHEBI:58349"/>
    </ligand>
</feature>
<feature type="binding site" evidence="1">
    <location>
        <position position="228"/>
    </location>
    <ligand>
        <name>shikimate</name>
        <dbReference type="ChEBI" id="CHEBI:36208"/>
    </ligand>
</feature>
<feature type="binding site" evidence="1">
    <location>
        <position position="249"/>
    </location>
    <ligand>
        <name>NADP(+)</name>
        <dbReference type="ChEBI" id="CHEBI:58349"/>
    </ligand>
</feature>
<sequence>MDDKSMARGRKAFVTGFPIRHSRSPLIHGFWLKELGIDGSYEAVEVKPEDFSSFAASLAANGFAGGNVTIPHKEAAYAAAESLDEAARAIGAVNTLWLENGRLCGGNTDAYGFAANLDASAPGWDKADRALVLGAGGASRAVVHALLSRGVCHVSVVNRTLSRAEELAAHFGARVYAHGWDEAQALVSNAGLIVNTTALGMSGHGEGQDFPIDLTCAPKEAVATDIVYVPLRTAFLNKAEKAGLKTVDGLGMLLHQAVPGFERWFGQRPQVTQALREHILADMAKAGAL</sequence>
<keyword id="KW-0028">Amino-acid biosynthesis</keyword>
<keyword id="KW-0057">Aromatic amino acid biosynthesis</keyword>
<keyword id="KW-0521">NADP</keyword>
<keyword id="KW-0560">Oxidoreductase</keyword>
<comment type="function">
    <text evidence="1">Involved in the biosynthesis of the chorismate, which leads to the biosynthesis of aromatic amino acids. Catalyzes the reversible NADPH linked reduction of 3-dehydroshikimate (DHSA) to yield shikimate (SA).</text>
</comment>
<comment type="catalytic activity">
    <reaction evidence="1">
        <text>shikimate + NADP(+) = 3-dehydroshikimate + NADPH + H(+)</text>
        <dbReference type="Rhea" id="RHEA:17737"/>
        <dbReference type="ChEBI" id="CHEBI:15378"/>
        <dbReference type="ChEBI" id="CHEBI:16630"/>
        <dbReference type="ChEBI" id="CHEBI:36208"/>
        <dbReference type="ChEBI" id="CHEBI:57783"/>
        <dbReference type="ChEBI" id="CHEBI:58349"/>
        <dbReference type="EC" id="1.1.1.25"/>
    </reaction>
</comment>
<comment type="pathway">
    <text evidence="1">Metabolic intermediate biosynthesis; chorismate biosynthesis; chorismate from D-erythrose 4-phosphate and phosphoenolpyruvate: step 4/7.</text>
</comment>
<comment type="subunit">
    <text evidence="1">Homodimer.</text>
</comment>
<comment type="similarity">
    <text evidence="1">Belongs to the shikimate dehydrogenase family.</text>
</comment>
<gene>
    <name evidence="1" type="primary">aroE</name>
    <name type="ordered locus">BMEI2058</name>
</gene>
<proteinExistence type="inferred from homology"/>
<reference key="1">
    <citation type="journal article" date="2002" name="Proc. Natl. Acad. Sci. U.S.A.">
        <title>The genome sequence of the facultative intracellular pathogen Brucella melitensis.</title>
        <authorList>
            <person name="DelVecchio V.G."/>
            <person name="Kapatral V."/>
            <person name="Redkar R.J."/>
            <person name="Patra G."/>
            <person name="Mujer C."/>
            <person name="Los T."/>
            <person name="Ivanova N."/>
            <person name="Anderson I."/>
            <person name="Bhattacharyya A."/>
            <person name="Lykidis A."/>
            <person name="Reznik G."/>
            <person name="Jablonski L."/>
            <person name="Larsen N."/>
            <person name="D'Souza M."/>
            <person name="Bernal A."/>
            <person name="Mazur M."/>
            <person name="Goltsman E."/>
            <person name="Selkov E."/>
            <person name="Elzer P.H."/>
            <person name="Hagius S."/>
            <person name="O'Callaghan D."/>
            <person name="Letesson J.-J."/>
            <person name="Haselkorn R."/>
            <person name="Kyrpides N.C."/>
            <person name="Overbeek R."/>
        </authorList>
    </citation>
    <scope>NUCLEOTIDE SEQUENCE [LARGE SCALE GENOMIC DNA]</scope>
    <source>
        <strain>ATCC 23456 / CCUG 17765 / NCTC 10094 / 16M</strain>
    </source>
</reference>
<protein>
    <recommendedName>
        <fullName evidence="1">Shikimate dehydrogenase (NADP(+))</fullName>
        <shortName evidence="1">SDH</shortName>
        <ecNumber evidence="1">1.1.1.25</ecNumber>
    </recommendedName>
</protein>
<evidence type="ECO:0000255" key="1">
    <source>
        <dbReference type="HAMAP-Rule" id="MF_00222"/>
    </source>
</evidence>
<name>AROE_BRUME</name>
<organism>
    <name type="scientific">Brucella melitensis biotype 1 (strain ATCC 23456 / CCUG 17765 / NCTC 10094 / 16M)</name>
    <dbReference type="NCBI Taxonomy" id="224914"/>
    <lineage>
        <taxon>Bacteria</taxon>
        <taxon>Pseudomonadati</taxon>
        <taxon>Pseudomonadota</taxon>
        <taxon>Alphaproteobacteria</taxon>
        <taxon>Hyphomicrobiales</taxon>
        <taxon>Brucellaceae</taxon>
        <taxon>Brucella/Ochrobactrum group</taxon>
        <taxon>Brucella</taxon>
    </lineage>
</organism>